<keyword id="KW-0131">Cell cycle</keyword>
<keyword id="KW-0539">Nucleus</keyword>
<keyword id="KW-1185">Reference proteome</keyword>
<keyword id="KW-0678">Repressor</keyword>
<keyword id="KW-0804">Transcription</keyword>
<keyword id="KW-0805">Transcription regulation</keyword>
<dbReference type="EMBL" id="AY941774">
    <property type="protein sequence ID" value="AAY23368.1"/>
    <property type="molecule type" value="mRNA"/>
</dbReference>
<dbReference type="EMBL" id="AP004592">
    <property type="protein sequence ID" value="BAC75848.1"/>
    <property type="molecule type" value="Genomic_DNA"/>
</dbReference>
<dbReference type="EMBL" id="AP008214">
    <property type="protein sequence ID" value="BAF24286.2"/>
    <property type="status" value="ALT_SEQ"/>
    <property type="molecule type" value="Genomic_DNA"/>
</dbReference>
<dbReference type="EMBL" id="AP014964">
    <property type="protein sequence ID" value="BAT06468.1"/>
    <property type="molecule type" value="Genomic_DNA"/>
</dbReference>
<dbReference type="EMBL" id="CM000138">
    <property type="protein sequence ID" value="EAZ13004.1"/>
    <property type="status" value="ALT_SEQ"/>
    <property type="molecule type" value="Genomic_DNA"/>
</dbReference>
<dbReference type="EMBL" id="AK240830">
    <property type="protein sequence ID" value="BAH00876.1"/>
    <property type="molecule type" value="mRNA"/>
</dbReference>
<dbReference type="EMBL" id="AK241627">
    <property type="protein sequence ID" value="BAH01069.1"/>
    <property type="molecule type" value="mRNA"/>
</dbReference>
<dbReference type="RefSeq" id="XP_015648673.1">
    <property type="nucleotide sequence ID" value="XM_015793187.1"/>
</dbReference>
<dbReference type="SMR" id="Q84QM3"/>
<dbReference type="FunCoup" id="Q84QM3">
    <property type="interactions" value="1864"/>
</dbReference>
<dbReference type="STRING" id="39947.Q84QM3"/>
<dbReference type="iPTMnet" id="Q84QM3"/>
<dbReference type="PaxDb" id="39947-Q84QM3"/>
<dbReference type="EnsemblPlants" id="Os08t0538700-01">
    <property type="protein sequence ID" value="Os08t0538700-01"/>
    <property type="gene ID" value="Os08g0538700"/>
</dbReference>
<dbReference type="EnsemblPlants" id="Os08t0538700-02">
    <property type="protein sequence ID" value="Os08t0538700-02"/>
    <property type="gene ID" value="Os08g0538700"/>
</dbReference>
<dbReference type="Gramene" id="Os08t0538700-01">
    <property type="protein sequence ID" value="Os08t0538700-01"/>
    <property type="gene ID" value="Os08g0538700"/>
</dbReference>
<dbReference type="Gramene" id="Os08t0538700-02">
    <property type="protein sequence ID" value="Os08t0538700-02"/>
    <property type="gene ID" value="Os08g0538700"/>
</dbReference>
<dbReference type="KEGG" id="dosa:Os08g0538700"/>
<dbReference type="eggNOG" id="KOG1010">
    <property type="taxonomic scope" value="Eukaryota"/>
</dbReference>
<dbReference type="HOGENOM" id="CLU_015949_0_0_1"/>
<dbReference type="InParanoid" id="Q84QM3"/>
<dbReference type="OMA" id="VYCQSTQ"/>
<dbReference type="OrthoDB" id="844594at2759"/>
<dbReference type="PlantReactome" id="R-OSA-9640887">
    <property type="pathway name" value="G1/S transition"/>
</dbReference>
<dbReference type="Proteomes" id="UP000000763">
    <property type="component" value="Chromosome 8"/>
</dbReference>
<dbReference type="Proteomes" id="UP000007752">
    <property type="component" value="Chromosome 1"/>
</dbReference>
<dbReference type="Proteomes" id="UP000059680">
    <property type="component" value="Chromosome 8"/>
</dbReference>
<dbReference type="GO" id="GO:0000785">
    <property type="term" value="C:chromatin"/>
    <property type="evidence" value="ECO:0000318"/>
    <property type="project" value="GO_Central"/>
</dbReference>
<dbReference type="GO" id="GO:0005634">
    <property type="term" value="C:nucleus"/>
    <property type="evidence" value="ECO:0007669"/>
    <property type="project" value="UniProtKB-SubCell"/>
</dbReference>
<dbReference type="GO" id="GO:0005667">
    <property type="term" value="C:transcription regulator complex"/>
    <property type="evidence" value="ECO:0000318"/>
    <property type="project" value="GO_Central"/>
</dbReference>
<dbReference type="GO" id="GO:0000977">
    <property type="term" value="F:RNA polymerase II transcription regulatory region sequence-specific DNA binding"/>
    <property type="evidence" value="ECO:0000318"/>
    <property type="project" value="GO_Central"/>
</dbReference>
<dbReference type="GO" id="GO:0030154">
    <property type="term" value="P:cell differentiation"/>
    <property type="evidence" value="ECO:0000318"/>
    <property type="project" value="GO_Central"/>
</dbReference>
<dbReference type="GO" id="GO:2000134">
    <property type="term" value="P:negative regulation of G1/S transition of mitotic cell cycle"/>
    <property type="evidence" value="ECO:0000318"/>
    <property type="project" value="GO_Central"/>
</dbReference>
<dbReference type="GO" id="GO:0006357">
    <property type="term" value="P:regulation of transcription by RNA polymerase II"/>
    <property type="evidence" value="ECO:0007669"/>
    <property type="project" value="InterPro"/>
</dbReference>
<dbReference type="FunFam" id="1.10.472.10:FF:000030">
    <property type="entry name" value="Retinoblastoma-related protein 1"/>
    <property type="match status" value="1"/>
</dbReference>
<dbReference type="FunFam" id="1.10.472.10:FF:000067">
    <property type="entry name" value="Retinoblastoma-related protein 1"/>
    <property type="match status" value="1"/>
</dbReference>
<dbReference type="FunFam" id="1.10.472.140:FF:000003">
    <property type="entry name" value="Retinoblastoma-related protein 1"/>
    <property type="match status" value="1"/>
</dbReference>
<dbReference type="Gene3D" id="1.10.472.140">
    <property type="match status" value="1"/>
</dbReference>
<dbReference type="Gene3D" id="1.10.472.10">
    <property type="entry name" value="Cyclin-like"/>
    <property type="match status" value="2"/>
</dbReference>
<dbReference type="InterPro" id="IPR036915">
    <property type="entry name" value="Cyclin-like_sf"/>
</dbReference>
<dbReference type="InterPro" id="IPR002720">
    <property type="entry name" value="RB_A"/>
</dbReference>
<dbReference type="InterPro" id="IPR002719">
    <property type="entry name" value="RB_B"/>
</dbReference>
<dbReference type="InterPro" id="IPR015030">
    <property type="entry name" value="RB_C"/>
</dbReference>
<dbReference type="InterPro" id="IPR028309">
    <property type="entry name" value="RB_fam"/>
</dbReference>
<dbReference type="InterPro" id="IPR024599">
    <property type="entry name" value="RB_N"/>
</dbReference>
<dbReference type="PANTHER" id="PTHR13742:SF17">
    <property type="entry name" value="RE32990P-RELATED"/>
    <property type="match status" value="1"/>
</dbReference>
<dbReference type="PANTHER" id="PTHR13742">
    <property type="entry name" value="RETINOBLASTOMA-ASSOCIATED PROTEIN RB -RELATED"/>
    <property type="match status" value="1"/>
</dbReference>
<dbReference type="Pfam" id="PF11934">
    <property type="entry name" value="DUF3452"/>
    <property type="match status" value="1"/>
</dbReference>
<dbReference type="Pfam" id="PF01858">
    <property type="entry name" value="RB_A"/>
    <property type="match status" value="1"/>
</dbReference>
<dbReference type="Pfam" id="PF01857">
    <property type="entry name" value="RB_B"/>
    <property type="match status" value="1"/>
</dbReference>
<dbReference type="SMART" id="SM01367">
    <property type="entry name" value="DUF3452"/>
    <property type="match status" value="1"/>
</dbReference>
<dbReference type="SMART" id="SM01368">
    <property type="entry name" value="RB_A"/>
    <property type="match status" value="1"/>
</dbReference>
<dbReference type="SMART" id="SM01369">
    <property type="entry name" value="Rb_C"/>
    <property type="match status" value="1"/>
</dbReference>
<dbReference type="SUPFAM" id="SSF47954">
    <property type="entry name" value="Cyclin-like"/>
    <property type="match status" value="2"/>
</dbReference>
<proteinExistence type="evidence at transcript level"/>
<gene>
    <name type="primary">RBR1</name>
    <name type="ordered locus">Os08g0538700</name>
    <name type="ordered locus">LOC_Os08g42600</name>
    <name type="ORF">OsJ_002829</name>
    <name type="ORF">P0666G10.104</name>
</gene>
<reference key="1">
    <citation type="journal article" date="2007" name="J. Exp. Bot.">
        <title>Dicot and monocot plants differ in retinoblastoma-related protein subfamilies.</title>
        <authorList>
            <person name="Lendvai A."/>
            <person name="Pettko-Szandtner A."/>
            <person name="Csordas-Toth E."/>
            <person name="Miskolczi P."/>
            <person name="Horvath G.V."/>
            <person name="Gyoergyey J."/>
            <person name="Dudits D."/>
        </authorList>
    </citation>
    <scope>NUCLEOTIDE SEQUENCE [MRNA]</scope>
    <scope>GENE FAMILY</scope>
    <scope>NOMENCLATURE</scope>
    <source>
        <strain>cv. Taipei 309</strain>
    </source>
</reference>
<reference key="2">
    <citation type="journal article" date="2005" name="Nature">
        <title>The map-based sequence of the rice genome.</title>
        <authorList>
            <consortium name="International rice genome sequencing project (IRGSP)"/>
        </authorList>
    </citation>
    <scope>NUCLEOTIDE SEQUENCE [LARGE SCALE GENOMIC DNA]</scope>
    <source>
        <strain>cv. Nipponbare</strain>
    </source>
</reference>
<reference key="3">
    <citation type="journal article" date="2008" name="Nucleic Acids Res.">
        <title>The rice annotation project database (RAP-DB): 2008 update.</title>
        <authorList>
            <consortium name="The rice annotation project (RAP)"/>
        </authorList>
    </citation>
    <scope>GENOME REANNOTATION</scope>
    <source>
        <strain>cv. Nipponbare</strain>
    </source>
</reference>
<reference key="4">
    <citation type="journal article" date="2013" name="Rice">
        <title>Improvement of the Oryza sativa Nipponbare reference genome using next generation sequence and optical map data.</title>
        <authorList>
            <person name="Kawahara Y."/>
            <person name="de la Bastide M."/>
            <person name="Hamilton J.P."/>
            <person name="Kanamori H."/>
            <person name="McCombie W.R."/>
            <person name="Ouyang S."/>
            <person name="Schwartz D.C."/>
            <person name="Tanaka T."/>
            <person name="Wu J."/>
            <person name="Zhou S."/>
            <person name="Childs K.L."/>
            <person name="Davidson R.M."/>
            <person name="Lin H."/>
            <person name="Quesada-Ocampo L."/>
            <person name="Vaillancourt B."/>
            <person name="Sakai H."/>
            <person name="Lee S.S."/>
            <person name="Kim J."/>
            <person name="Numa H."/>
            <person name="Itoh T."/>
            <person name="Buell C.R."/>
            <person name="Matsumoto T."/>
        </authorList>
    </citation>
    <scope>GENOME REANNOTATION</scope>
    <source>
        <strain>cv. Nipponbare</strain>
    </source>
</reference>
<reference key="5">
    <citation type="journal article" date="2005" name="PLoS Biol.">
        <title>The genomes of Oryza sativa: a history of duplications.</title>
        <authorList>
            <person name="Yu J."/>
            <person name="Wang J."/>
            <person name="Lin W."/>
            <person name="Li S."/>
            <person name="Li H."/>
            <person name="Zhou J."/>
            <person name="Ni P."/>
            <person name="Dong W."/>
            <person name="Hu S."/>
            <person name="Zeng C."/>
            <person name="Zhang J."/>
            <person name="Zhang Y."/>
            <person name="Li R."/>
            <person name="Xu Z."/>
            <person name="Li S."/>
            <person name="Li X."/>
            <person name="Zheng H."/>
            <person name="Cong L."/>
            <person name="Lin L."/>
            <person name="Yin J."/>
            <person name="Geng J."/>
            <person name="Li G."/>
            <person name="Shi J."/>
            <person name="Liu J."/>
            <person name="Lv H."/>
            <person name="Li J."/>
            <person name="Wang J."/>
            <person name="Deng Y."/>
            <person name="Ran L."/>
            <person name="Shi X."/>
            <person name="Wang X."/>
            <person name="Wu Q."/>
            <person name="Li C."/>
            <person name="Ren X."/>
            <person name="Wang J."/>
            <person name="Wang X."/>
            <person name="Li D."/>
            <person name="Liu D."/>
            <person name="Zhang X."/>
            <person name="Ji Z."/>
            <person name="Zhao W."/>
            <person name="Sun Y."/>
            <person name="Zhang Z."/>
            <person name="Bao J."/>
            <person name="Han Y."/>
            <person name="Dong L."/>
            <person name="Ji J."/>
            <person name="Chen P."/>
            <person name="Wu S."/>
            <person name="Liu J."/>
            <person name="Xiao Y."/>
            <person name="Bu D."/>
            <person name="Tan J."/>
            <person name="Yang L."/>
            <person name="Ye C."/>
            <person name="Zhang J."/>
            <person name="Xu J."/>
            <person name="Zhou Y."/>
            <person name="Yu Y."/>
            <person name="Zhang B."/>
            <person name="Zhuang S."/>
            <person name="Wei H."/>
            <person name="Liu B."/>
            <person name="Lei M."/>
            <person name="Yu H."/>
            <person name="Li Y."/>
            <person name="Xu H."/>
            <person name="Wei S."/>
            <person name="He X."/>
            <person name="Fang L."/>
            <person name="Zhang Z."/>
            <person name="Zhang Y."/>
            <person name="Huang X."/>
            <person name="Su Z."/>
            <person name="Tong W."/>
            <person name="Li J."/>
            <person name="Tong Z."/>
            <person name="Li S."/>
            <person name="Ye J."/>
            <person name="Wang L."/>
            <person name="Fang L."/>
            <person name="Lei T."/>
            <person name="Chen C.-S."/>
            <person name="Chen H.-C."/>
            <person name="Xu Z."/>
            <person name="Li H."/>
            <person name="Huang H."/>
            <person name="Zhang F."/>
            <person name="Xu H."/>
            <person name="Li N."/>
            <person name="Zhao C."/>
            <person name="Li S."/>
            <person name="Dong L."/>
            <person name="Huang Y."/>
            <person name="Li L."/>
            <person name="Xi Y."/>
            <person name="Qi Q."/>
            <person name="Li W."/>
            <person name="Zhang B."/>
            <person name="Hu W."/>
            <person name="Zhang Y."/>
            <person name="Tian X."/>
            <person name="Jiao Y."/>
            <person name="Liang X."/>
            <person name="Jin J."/>
            <person name="Gao L."/>
            <person name="Zheng W."/>
            <person name="Hao B."/>
            <person name="Liu S.-M."/>
            <person name="Wang W."/>
            <person name="Yuan L."/>
            <person name="Cao M."/>
            <person name="McDermott J."/>
            <person name="Samudrala R."/>
            <person name="Wang J."/>
            <person name="Wong G.K.-S."/>
            <person name="Yang H."/>
        </authorList>
    </citation>
    <scope>NUCLEOTIDE SEQUENCE [LARGE SCALE GENOMIC DNA]</scope>
    <source>
        <strain>cv. Nipponbare</strain>
    </source>
</reference>
<reference key="6">
    <citation type="submission" date="2006-10" db="EMBL/GenBank/DDBJ databases">
        <title>Oryza sativa full length cDNA.</title>
        <authorList>
            <consortium name="The rice full-length cDNA consortium"/>
        </authorList>
    </citation>
    <scope>NUCLEOTIDE SEQUENCE [LARGE SCALE MRNA]</scope>
    <source>
        <strain>cv. Nipponbare</strain>
    </source>
</reference>
<protein>
    <recommendedName>
        <fullName>Retinoblastoma-related protein 1</fullName>
        <shortName>OsRBR1</shortName>
    </recommendedName>
</protein>
<name>RBR1_ORYSJ</name>
<sequence>MEGAAPPASSGSEVTGAGSGKVDAGGGAAMEERFADLCKSKLGLDESITRQAMQLFKESKSILLSSMSSLGSGSPEEIERFWSAFVLYCVSRLGKAGKGKEDGGISLCQILRAFSLNIVDFFKEMPQFCIKVGSVLAGLYGSDWEKRLELKELQANVVHLSLLSRYYKRAYQELFLLNDAKPPENSAEPNAQASDYYRFGWLLFLVLRIQTFSRFKDLVTSTNGLVSVLAVLIVHIPVRLRNFNIKESSSFAKKSDKGVNLIASLCEKYHTSEDELSKAIEKTNTLIVDILKKKPCPAASECQQDRLSFIDPEGLTYFKNLLEEDSLKLSLLMLEKEYENAINTKGELDERMFANDEDSLLGSGSLSGGAINLPGTKRKYDVMASPAKSITSPSPMSPPRFCASPTGNGYCSSKMAPITPVSTAMTTAKWLRSTISPLPSKPSGELLRFFSACDKDVTDDITRRAGIILGAIFTSSSFGERICTSVRSTNRIDAIWTEQRKMEALKLYYRVLESMCRAETQILSGNNLTSLLSNERFHRCMIACSAELVLATHKTVTMMFPAVLEKTGITAFDLSKVIESFVRHEDTLPRELKRHLNSLEERLLESMAWEKGSSMYNSLIVARPTLSAEINRLGLLAEPMPSLDAIAAHHNISLEGLPPLPFQKQEHSPDKDEVRSPKRACTERRNVLVDNNSFRSPVKDTLKSKLPPLQSAFLSPTRPNPAAGGELCAETGIGVFLSKIAKLAAIRIRGLCERLQLSQQVLERVYSLVQQIIIQQTALFFNRHIDQIILCSIYGVAKISQLALTFKEIIFGYRKQSQCKPQVFRSVYVHWASRSRNGKTGEDHVDIITFYNEVFIPTVKPLLVELGSGTSPNKKNEEKCAADGPYPESPRLSRFPNLPDMSPKKVSAAHNVYVSPLRTSKMDTLLSPSSKSYYACVGESTHAFQSPSKDLKVINNRLNSGKKVSGRLNFDVVSDLVVARSLSDQNSASAAATTADIATKTPVKLEQPDC</sequence>
<evidence type="ECO:0000250" key="1"/>
<evidence type="ECO:0000256" key="2">
    <source>
        <dbReference type="SAM" id="MobiDB-lite"/>
    </source>
</evidence>
<evidence type="ECO:0000305" key="3"/>
<accession>Q84QM3</accession>
<accession>A0A0P0XI99</accession>
<accession>A2ZWA7</accession>
<accession>A9UL15</accession>
<accession>B7F8C8</accession>
<organism>
    <name type="scientific">Oryza sativa subsp. japonica</name>
    <name type="common">Rice</name>
    <dbReference type="NCBI Taxonomy" id="39947"/>
    <lineage>
        <taxon>Eukaryota</taxon>
        <taxon>Viridiplantae</taxon>
        <taxon>Streptophyta</taxon>
        <taxon>Embryophyta</taxon>
        <taxon>Tracheophyta</taxon>
        <taxon>Spermatophyta</taxon>
        <taxon>Magnoliopsida</taxon>
        <taxon>Liliopsida</taxon>
        <taxon>Poales</taxon>
        <taxon>Poaceae</taxon>
        <taxon>BOP clade</taxon>
        <taxon>Oryzoideae</taxon>
        <taxon>Oryzeae</taxon>
        <taxon>Oryzinae</taxon>
        <taxon>Oryza</taxon>
        <taxon>Oryza sativa</taxon>
    </lineage>
</organism>
<comment type="function">
    <text evidence="1">Regulator of biological processes that recruits a histone deacetylase to control gene transcription. May play a role in the entry into mitosis, negatively regulating the cell proliferation. Formation of stable complexes with geminiviridae replication-associated proteins may create a cellular environment which favors viral DNA replication (By similarity).</text>
</comment>
<comment type="subcellular location">
    <subcellularLocation>
        <location evidence="1">Nucleus</location>
    </subcellularLocation>
</comment>
<comment type="similarity">
    <text evidence="3">Belongs to the retinoblastoma protein (RB) family.</text>
</comment>
<comment type="sequence caution" evidence="3">
    <conflict type="erroneous gene model prediction">
        <sequence resource="EMBL-CDS" id="BAF24286"/>
    </conflict>
</comment>
<comment type="sequence caution" evidence="3">
    <conflict type="erroneous gene model prediction">
        <sequence resource="EMBL-CDS" id="EAZ13004"/>
    </conflict>
</comment>
<feature type="chain" id="PRO_0000335249" description="Retinoblastoma-related protein 1">
    <location>
        <begin position="1"/>
        <end position="1010"/>
    </location>
</feature>
<feature type="region of interest" description="Disordered" evidence="2">
    <location>
        <begin position="1"/>
        <end position="23"/>
    </location>
</feature>
<feature type="region of interest" description="Pocket">
    <location>
        <begin position="419"/>
        <end position="861"/>
    </location>
</feature>
<feature type="region of interest" description="Domain A">
    <location>
        <begin position="419"/>
        <end position="619"/>
    </location>
</feature>
<feature type="region of interest" description="Spacer">
    <location>
        <begin position="620"/>
        <end position="730"/>
    </location>
</feature>
<feature type="region of interest" description="Disordered" evidence="2">
    <location>
        <begin position="657"/>
        <end position="679"/>
    </location>
</feature>
<feature type="region of interest" description="Domain B">
    <location>
        <begin position="731"/>
        <end position="861"/>
    </location>
</feature>
<feature type="region of interest" description="Disordered" evidence="2">
    <location>
        <begin position="868"/>
        <end position="898"/>
    </location>
</feature>
<feature type="compositionally biased region" description="Basic and acidic residues" evidence="2">
    <location>
        <begin position="664"/>
        <end position="679"/>
    </location>
</feature>
<feature type="sequence conflict" description="In Ref. 1; AAY23368." evidence="3" ref="1">
    <original>G</original>
    <variation>R</variation>
    <location>
        <position position="867"/>
    </location>
</feature>